<keyword id="KW-0010">Activator</keyword>
<keyword id="KW-0238">DNA-binding</keyword>
<keyword id="KW-0804">Transcription</keyword>
<keyword id="KW-0805">Transcription regulation</keyword>
<feature type="initiator methionine" description="Removed" evidence="1">
    <location>
        <position position="1"/>
    </location>
</feature>
<feature type="chain" id="PRO_0000111727" description="Leucine-responsive regulatory protein">
    <location>
        <begin position="2"/>
        <end position="164"/>
    </location>
</feature>
<feature type="domain" description="HTH asnC-type" evidence="2">
    <location>
        <begin position="12"/>
        <end position="73"/>
    </location>
</feature>
<feature type="DNA-binding region" description="H-T-H motif" evidence="2">
    <location>
        <begin position="31"/>
        <end position="50"/>
    </location>
</feature>
<feature type="sequence conflict" description="In Ref. 2; AAD12584." evidence="3" ref="2">
    <original>T</original>
    <variation>A</variation>
    <location>
        <position position="95"/>
    </location>
</feature>
<comment type="function">
    <text evidence="1">Mediates a global response to leucine. Exogenous leucine affects the expression of a number of different operons; lrp mediates this effect for at least some of these operons. For example it is regulator of the branched-chain amino acid transport genes (By similarity).</text>
</comment>
<comment type="subunit">
    <text evidence="1">Homodimer.</text>
</comment>
<gene>
    <name type="primary">lrp</name>
</gene>
<proteinExistence type="inferred from homology"/>
<organism>
    <name type="scientific">Klebsiella aerogenes</name>
    <name type="common">Enterobacter aerogenes</name>
    <dbReference type="NCBI Taxonomy" id="548"/>
    <lineage>
        <taxon>Bacteria</taxon>
        <taxon>Pseudomonadati</taxon>
        <taxon>Pseudomonadota</taxon>
        <taxon>Gammaproteobacteria</taxon>
        <taxon>Enterobacterales</taxon>
        <taxon>Enterobacteriaceae</taxon>
        <taxon>Klebsiella/Raoultella group</taxon>
        <taxon>Klebsiella</taxon>
    </lineage>
</organism>
<accession>P0ACJ4</accession>
<accession>O87635</accession>
<accession>P0A2S1</accession>
<accession>P19494</accession>
<accession>P37403</accession>
<evidence type="ECO:0000250" key="1"/>
<evidence type="ECO:0000255" key="2">
    <source>
        <dbReference type="PROSITE-ProRule" id="PRU00319"/>
    </source>
</evidence>
<evidence type="ECO:0000305" key="3"/>
<name>LRP_KLEAE</name>
<dbReference type="EMBL" id="U02272">
    <property type="protein sequence ID" value="AAA75439.1"/>
    <property type="molecule type" value="Genomic_DNA"/>
</dbReference>
<dbReference type="EMBL" id="AF090144">
    <property type="protein sequence ID" value="AAD12584.1"/>
    <property type="molecule type" value="Genomic_DNA"/>
</dbReference>
<dbReference type="SMR" id="P0ACJ4"/>
<dbReference type="STRING" id="548.EAG7_02473"/>
<dbReference type="GO" id="GO:0005829">
    <property type="term" value="C:cytosol"/>
    <property type="evidence" value="ECO:0007669"/>
    <property type="project" value="TreeGrafter"/>
</dbReference>
<dbReference type="GO" id="GO:0043565">
    <property type="term" value="F:sequence-specific DNA binding"/>
    <property type="evidence" value="ECO:0007669"/>
    <property type="project" value="InterPro"/>
</dbReference>
<dbReference type="GO" id="GO:0006524">
    <property type="term" value="P:alanine catabolic process"/>
    <property type="evidence" value="ECO:0007669"/>
    <property type="project" value="TreeGrafter"/>
</dbReference>
<dbReference type="GO" id="GO:0006355">
    <property type="term" value="P:regulation of DNA-templated transcription"/>
    <property type="evidence" value="ECO:0007669"/>
    <property type="project" value="UniProtKB-ARBA"/>
</dbReference>
<dbReference type="GO" id="GO:0043201">
    <property type="term" value="P:response to L-leucine"/>
    <property type="evidence" value="ECO:0007669"/>
    <property type="project" value="TreeGrafter"/>
</dbReference>
<dbReference type="CDD" id="cd00090">
    <property type="entry name" value="HTH_ARSR"/>
    <property type="match status" value="1"/>
</dbReference>
<dbReference type="FunFam" id="1.10.10.10:FF:000015">
    <property type="entry name" value="Leucine-responsive transcriptional regulator Lrp"/>
    <property type="match status" value="1"/>
</dbReference>
<dbReference type="FunFam" id="3.30.70.920:FF:000001">
    <property type="entry name" value="Transcriptional regulator, AsnC family"/>
    <property type="match status" value="1"/>
</dbReference>
<dbReference type="Gene3D" id="3.30.70.920">
    <property type="match status" value="1"/>
</dbReference>
<dbReference type="Gene3D" id="1.10.10.10">
    <property type="entry name" value="Winged helix-like DNA-binding domain superfamily/Winged helix DNA-binding domain"/>
    <property type="match status" value="1"/>
</dbReference>
<dbReference type="InterPro" id="IPR011991">
    <property type="entry name" value="ArsR-like_HTH"/>
</dbReference>
<dbReference type="InterPro" id="IPR000485">
    <property type="entry name" value="AsnC-type_HTH_dom"/>
</dbReference>
<dbReference type="InterPro" id="IPR011008">
    <property type="entry name" value="Dimeric_a/b-barrel"/>
</dbReference>
<dbReference type="InterPro" id="IPR019888">
    <property type="entry name" value="Tscrpt_reg_AsnC-like"/>
</dbReference>
<dbReference type="InterPro" id="IPR019887">
    <property type="entry name" value="Tscrpt_reg_AsnC/Lrp_C"/>
</dbReference>
<dbReference type="InterPro" id="IPR019885">
    <property type="entry name" value="Tscrpt_reg_HTH_AsnC-type_CS"/>
</dbReference>
<dbReference type="InterPro" id="IPR036388">
    <property type="entry name" value="WH-like_DNA-bd_sf"/>
</dbReference>
<dbReference type="InterPro" id="IPR036390">
    <property type="entry name" value="WH_DNA-bd_sf"/>
</dbReference>
<dbReference type="NCBIfam" id="NF008370">
    <property type="entry name" value="PRK11169.1"/>
    <property type="match status" value="1"/>
</dbReference>
<dbReference type="PANTHER" id="PTHR30154">
    <property type="entry name" value="LEUCINE-RESPONSIVE REGULATORY PROTEIN"/>
    <property type="match status" value="1"/>
</dbReference>
<dbReference type="PANTHER" id="PTHR30154:SF0">
    <property type="entry name" value="LEUCINE-RESPONSIVE REGULATORY PROTEIN"/>
    <property type="match status" value="1"/>
</dbReference>
<dbReference type="Pfam" id="PF01037">
    <property type="entry name" value="AsnC_trans_reg"/>
    <property type="match status" value="1"/>
</dbReference>
<dbReference type="Pfam" id="PF13412">
    <property type="entry name" value="HTH_24"/>
    <property type="match status" value="1"/>
</dbReference>
<dbReference type="PRINTS" id="PR00033">
    <property type="entry name" value="HTHASNC"/>
</dbReference>
<dbReference type="SMART" id="SM00344">
    <property type="entry name" value="HTH_ASNC"/>
    <property type="match status" value="1"/>
</dbReference>
<dbReference type="SUPFAM" id="SSF54909">
    <property type="entry name" value="Dimeric alpha+beta barrel"/>
    <property type="match status" value="1"/>
</dbReference>
<dbReference type="SUPFAM" id="SSF46785">
    <property type="entry name" value="Winged helix' DNA-binding domain"/>
    <property type="match status" value="1"/>
</dbReference>
<dbReference type="PROSITE" id="PS00519">
    <property type="entry name" value="HTH_ASNC_1"/>
    <property type="match status" value="1"/>
</dbReference>
<dbReference type="PROSITE" id="PS50956">
    <property type="entry name" value="HTH_ASNC_2"/>
    <property type="match status" value="1"/>
</dbReference>
<sequence length="164" mass="18887">MVDSKKRPGKDLDRIDRNILNELQKDGRISNVELSKRVGLSPTPCLERVRRLERQGFIQGYTALLNPHYLDASLLVFVEITLNRGAPDVFEQFNTAVQKLEEIQECHLVSGDFDYLLKTRVPDMSAYRKLLGETLLRLPGVNDTRTYVVMEEVKQSNRLVIKTR</sequence>
<protein>
    <recommendedName>
        <fullName>Leucine-responsive regulatory protein</fullName>
    </recommendedName>
</protein>
<reference key="1">
    <citation type="journal article" date="1995" name="J. Bacteriol.">
        <title>The amino acid sequence of Lrp is highly conserved in four enteric microorganisms.</title>
        <authorList>
            <person name="Friedberg D."/>
            <person name="Platko J.V."/>
            <person name="Tyler B."/>
            <person name="Calvo J.M."/>
        </authorList>
    </citation>
    <scope>NUCLEOTIDE SEQUENCE [GENOMIC DNA]</scope>
</reference>
<reference key="2">
    <citation type="journal article" date="1999" name="J. Bacteriol.">
        <title>Two roles for the leucine-responsive regulatory protein in expression of the alanine catabolic operon (dadAB) in Klebsiella aerogenes.</title>
        <authorList>
            <person name="Janes B.K."/>
            <person name="Bender R.A."/>
        </authorList>
    </citation>
    <scope>NUCLEOTIDE SEQUENCE [GENOMIC DNA]</scope>
    <source>
        <strain>W70</strain>
    </source>
</reference>